<protein>
    <recommendedName>
        <fullName>Retinal rod rhodopsin-sensitive cGMP 3',5'-cyclic phosphodiesterase subunit delta</fullName>
        <shortName>GMP-PDE delta</shortName>
    </recommendedName>
    <alternativeName>
        <fullName>Protein p17</fullName>
    </alternativeName>
</protein>
<evidence type="ECO:0000250" key="1">
    <source>
        <dbReference type="UniProtKB" id="O55057"/>
    </source>
</evidence>
<evidence type="ECO:0000250" key="2">
    <source>
        <dbReference type="UniProtKB" id="Q95142"/>
    </source>
</evidence>
<evidence type="ECO:0000269" key="3">
    <source>
    </source>
</evidence>
<evidence type="ECO:0000269" key="4">
    <source>
    </source>
</evidence>
<evidence type="ECO:0000269" key="5">
    <source>
    </source>
</evidence>
<evidence type="ECO:0000269" key="6">
    <source>
    </source>
</evidence>
<evidence type="ECO:0000269" key="7">
    <source>
    </source>
</evidence>
<evidence type="ECO:0000269" key="8">
    <source>
    </source>
</evidence>
<evidence type="ECO:0000269" key="9">
    <source>
    </source>
</evidence>
<evidence type="ECO:0000269" key="10">
    <source>
    </source>
</evidence>
<evidence type="ECO:0000305" key="11"/>
<evidence type="ECO:0007829" key="12">
    <source>
        <dbReference type="PDB" id="5ML3"/>
    </source>
</evidence>
<evidence type="ECO:0007829" key="13">
    <source>
        <dbReference type="PDB" id="7PAD"/>
    </source>
</evidence>
<organism>
    <name type="scientific">Homo sapiens</name>
    <name type="common">Human</name>
    <dbReference type="NCBI Taxonomy" id="9606"/>
    <lineage>
        <taxon>Eukaryota</taxon>
        <taxon>Metazoa</taxon>
        <taxon>Chordata</taxon>
        <taxon>Craniata</taxon>
        <taxon>Vertebrata</taxon>
        <taxon>Euteleostomi</taxon>
        <taxon>Mammalia</taxon>
        <taxon>Eutheria</taxon>
        <taxon>Euarchontoglires</taxon>
        <taxon>Primates</taxon>
        <taxon>Haplorrhini</taxon>
        <taxon>Catarrhini</taxon>
        <taxon>Hominidae</taxon>
        <taxon>Homo</taxon>
    </lineage>
</organism>
<name>PDE6D_HUMAN</name>
<proteinExistence type="evidence at protein level"/>
<accession>O43924</accession>
<accession>O43250</accession>
<dbReference type="EMBL" id="AF045999">
    <property type="protein sequence ID" value="AAC39720.1"/>
    <property type="molecule type" value="Genomic_DNA"/>
</dbReference>
<dbReference type="EMBL" id="AF022912">
    <property type="protein sequence ID" value="AAB87872.1"/>
    <property type="molecule type" value="mRNA"/>
</dbReference>
<dbReference type="EMBL" id="AF042835">
    <property type="protein sequence ID" value="AAC25953.1"/>
    <property type="molecule type" value="Genomic_DNA"/>
</dbReference>
<dbReference type="EMBL" id="AF042833">
    <property type="protein sequence ID" value="AAC25953.1"/>
    <property type="status" value="JOINED"/>
    <property type="molecule type" value="Genomic_DNA"/>
</dbReference>
<dbReference type="EMBL" id="AF042834">
    <property type="protein sequence ID" value="AAC25953.1"/>
    <property type="status" value="JOINED"/>
    <property type="molecule type" value="Genomic_DNA"/>
</dbReference>
<dbReference type="EMBL" id="AJ001626">
    <property type="protein sequence ID" value="CAA04880.1"/>
    <property type="molecule type" value="mRNA"/>
</dbReference>
<dbReference type="EMBL" id="BT007278">
    <property type="protein sequence ID" value="AAP35942.1"/>
    <property type="molecule type" value="mRNA"/>
</dbReference>
<dbReference type="EMBL" id="BC007831">
    <property type="protein sequence ID" value="AAH07831.1"/>
    <property type="molecule type" value="mRNA"/>
</dbReference>
<dbReference type="CCDS" id="CCDS33398.1"/>
<dbReference type="RefSeq" id="NP_001277947.1">
    <property type="nucleotide sequence ID" value="NM_001291018.1"/>
</dbReference>
<dbReference type="RefSeq" id="NP_002592.1">
    <property type="nucleotide sequence ID" value="NM_002601.4"/>
</dbReference>
<dbReference type="PDB" id="1KSG">
    <property type="method" value="X-ray"/>
    <property type="resolution" value="2.30 A"/>
    <property type="chains" value="B=1-150"/>
</dbReference>
<dbReference type="PDB" id="1KSH">
    <property type="method" value="X-ray"/>
    <property type="resolution" value="1.80 A"/>
    <property type="chains" value="B=1-150"/>
</dbReference>
<dbReference type="PDB" id="1KSJ">
    <property type="method" value="X-ray"/>
    <property type="resolution" value="2.60 A"/>
    <property type="chains" value="B=1-150"/>
</dbReference>
<dbReference type="PDB" id="3T5G">
    <property type="method" value="X-ray"/>
    <property type="resolution" value="1.70 A"/>
    <property type="chains" value="B=1-150"/>
</dbReference>
<dbReference type="PDB" id="3T5I">
    <property type="method" value="X-ray"/>
    <property type="resolution" value="2.10 A"/>
    <property type="chains" value="A/B/C/D=1-150"/>
</dbReference>
<dbReference type="PDB" id="4JHP">
    <property type="method" value="X-ray"/>
    <property type="resolution" value="1.90 A"/>
    <property type="chains" value="B=1-150"/>
</dbReference>
<dbReference type="PDB" id="4JV6">
    <property type="method" value="X-ray"/>
    <property type="resolution" value="1.87 A"/>
    <property type="chains" value="B=1-150"/>
</dbReference>
<dbReference type="PDB" id="4JV8">
    <property type="method" value="X-ray"/>
    <property type="resolution" value="1.45 A"/>
    <property type="chains" value="B=1-150"/>
</dbReference>
<dbReference type="PDB" id="4JVB">
    <property type="method" value="X-ray"/>
    <property type="resolution" value="1.75 A"/>
    <property type="chains" value="B=1-150"/>
</dbReference>
<dbReference type="PDB" id="4JVF">
    <property type="method" value="X-ray"/>
    <property type="resolution" value="2.40 A"/>
    <property type="chains" value="B=1-150"/>
</dbReference>
<dbReference type="PDB" id="5E80">
    <property type="method" value="X-ray"/>
    <property type="resolution" value="2.60 A"/>
    <property type="chains" value="A/B=2-150"/>
</dbReference>
<dbReference type="PDB" id="5E8F">
    <property type="method" value="X-ray"/>
    <property type="resolution" value="2.10 A"/>
    <property type="chains" value="A/C=2-150"/>
</dbReference>
<dbReference type="PDB" id="5F2U">
    <property type="method" value="X-ray"/>
    <property type="resolution" value="1.85 A"/>
    <property type="chains" value="A/B=2-150"/>
</dbReference>
<dbReference type="PDB" id="5ML2">
    <property type="method" value="X-ray"/>
    <property type="resolution" value="1.60 A"/>
    <property type="chains" value="B=2-150"/>
</dbReference>
<dbReference type="PDB" id="5ML3">
    <property type="method" value="X-ray"/>
    <property type="resolution" value="1.40 A"/>
    <property type="chains" value="B=2-150"/>
</dbReference>
<dbReference type="PDB" id="5ML4">
    <property type="method" value="X-ray"/>
    <property type="resolution" value="2.40 A"/>
    <property type="chains" value="B=2-150"/>
</dbReference>
<dbReference type="PDB" id="5ML6">
    <property type="method" value="X-ray"/>
    <property type="resolution" value="1.87 A"/>
    <property type="chains" value="B=2-150"/>
</dbReference>
<dbReference type="PDB" id="5ML8">
    <property type="method" value="X-ray"/>
    <property type="resolution" value="2.60 A"/>
    <property type="chains" value="B=2-150"/>
</dbReference>
<dbReference type="PDB" id="5NAL">
    <property type="method" value="X-ray"/>
    <property type="resolution" value="2.20 A"/>
    <property type="chains" value="B=1-150"/>
</dbReference>
<dbReference type="PDB" id="5TAR">
    <property type="method" value="X-ray"/>
    <property type="resolution" value="1.90 A"/>
    <property type="chains" value="B=3-150"/>
</dbReference>
<dbReference type="PDB" id="5TB5">
    <property type="method" value="X-ray"/>
    <property type="resolution" value="2.00 A"/>
    <property type="chains" value="B/D=1-150"/>
</dbReference>
<dbReference type="PDB" id="5X72">
    <property type="method" value="X-ray"/>
    <property type="resolution" value="1.95 A"/>
    <property type="chains" value="A=1-150"/>
</dbReference>
<dbReference type="PDB" id="5X73">
    <property type="method" value="X-ray"/>
    <property type="resolution" value="2.50 A"/>
    <property type="chains" value="A=1-150"/>
</dbReference>
<dbReference type="PDB" id="5X74">
    <property type="method" value="X-ray"/>
    <property type="resolution" value="2.25 A"/>
    <property type="chains" value="A=1-150"/>
</dbReference>
<dbReference type="PDB" id="5YAV">
    <property type="method" value="X-ray"/>
    <property type="resolution" value="1.99 A"/>
    <property type="chains" value="B=1-150"/>
</dbReference>
<dbReference type="PDB" id="5YAW">
    <property type="method" value="X-ray"/>
    <property type="resolution" value="2.03 A"/>
    <property type="chains" value="B=1-150"/>
</dbReference>
<dbReference type="PDB" id="7PAC">
    <property type="method" value="X-ray"/>
    <property type="resolution" value="2.05 A"/>
    <property type="chains" value="B=2-150"/>
</dbReference>
<dbReference type="PDB" id="7PAD">
    <property type="method" value="X-ray"/>
    <property type="resolution" value="1.49 A"/>
    <property type="chains" value="B=2-150"/>
</dbReference>
<dbReference type="PDB" id="7PAE">
    <property type="method" value="X-ray"/>
    <property type="resolution" value="1.85 A"/>
    <property type="chains" value="B=2-150"/>
</dbReference>
<dbReference type="PDB" id="7Q9Q">
    <property type="method" value="X-ray"/>
    <property type="resolution" value="1.45 A"/>
    <property type="chains" value="BBB=2-150"/>
</dbReference>
<dbReference type="PDB" id="7Q9R">
    <property type="method" value="X-ray"/>
    <property type="resolution" value="2.50 A"/>
    <property type="chains" value="BBB=1-150"/>
</dbReference>
<dbReference type="PDB" id="7Q9S">
    <property type="method" value="X-ray"/>
    <property type="resolution" value="1.85 A"/>
    <property type="chains" value="AAA/BBB=1-150"/>
</dbReference>
<dbReference type="PDB" id="7Q9U">
    <property type="method" value="X-ray"/>
    <property type="resolution" value="2.24 A"/>
    <property type="chains" value="CCC/DDD=1-150"/>
</dbReference>
<dbReference type="PDB" id="7QF9">
    <property type="method" value="X-ray"/>
    <property type="resolution" value="1.95 A"/>
    <property type="chains" value="AAA/BBB=2-150"/>
</dbReference>
<dbReference type="PDB" id="7QJK">
    <property type="method" value="X-ray"/>
    <property type="resolution" value="3.10 A"/>
    <property type="chains" value="AAA/BBB/CCC/DDD=1-150"/>
</dbReference>
<dbReference type="PDBsum" id="1KSG"/>
<dbReference type="PDBsum" id="1KSH"/>
<dbReference type="PDBsum" id="1KSJ"/>
<dbReference type="PDBsum" id="3T5G"/>
<dbReference type="PDBsum" id="3T5I"/>
<dbReference type="PDBsum" id="4JHP"/>
<dbReference type="PDBsum" id="4JV6"/>
<dbReference type="PDBsum" id="4JV8"/>
<dbReference type="PDBsum" id="4JVB"/>
<dbReference type="PDBsum" id="4JVF"/>
<dbReference type="PDBsum" id="5E80"/>
<dbReference type="PDBsum" id="5E8F"/>
<dbReference type="PDBsum" id="5F2U"/>
<dbReference type="PDBsum" id="5ML2"/>
<dbReference type="PDBsum" id="5ML3"/>
<dbReference type="PDBsum" id="5ML4"/>
<dbReference type="PDBsum" id="5ML6"/>
<dbReference type="PDBsum" id="5ML8"/>
<dbReference type="PDBsum" id="5NAL"/>
<dbReference type="PDBsum" id="5TAR"/>
<dbReference type="PDBsum" id="5TB5"/>
<dbReference type="PDBsum" id="5X72"/>
<dbReference type="PDBsum" id="5X73"/>
<dbReference type="PDBsum" id="5X74"/>
<dbReference type="PDBsum" id="5YAV"/>
<dbReference type="PDBsum" id="5YAW"/>
<dbReference type="PDBsum" id="7PAC"/>
<dbReference type="PDBsum" id="7PAD"/>
<dbReference type="PDBsum" id="7PAE"/>
<dbReference type="PDBsum" id="7Q9Q"/>
<dbReference type="PDBsum" id="7Q9R"/>
<dbReference type="PDBsum" id="7Q9S"/>
<dbReference type="PDBsum" id="7Q9U"/>
<dbReference type="PDBsum" id="7QF9"/>
<dbReference type="PDBsum" id="7QJK"/>
<dbReference type="SMR" id="O43924"/>
<dbReference type="BioGRID" id="111173">
    <property type="interactions" value="62"/>
</dbReference>
<dbReference type="CORUM" id="O43924"/>
<dbReference type="DIP" id="DIP-36660N"/>
<dbReference type="FunCoup" id="O43924">
    <property type="interactions" value="2447"/>
</dbReference>
<dbReference type="IntAct" id="O43924">
    <property type="interactions" value="54"/>
</dbReference>
<dbReference type="MINT" id="O43924"/>
<dbReference type="STRING" id="9606.ENSP00000287600"/>
<dbReference type="BindingDB" id="O43924"/>
<dbReference type="ChEMBL" id="CHEMBL3860"/>
<dbReference type="DrugCentral" id="O43924"/>
<dbReference type="iPTMnet" id="O43924"/>
<dbReference type="PhosphoSitePlus" id="O43924"/>
<dbReference type="BioMuta" id="PDE6D"/>
<dbReference type="jPOST" id="O43924"/>
<dbReference type="MassIVE" id="O43924"/>
<dbReference type="PaxDb" id="9606-ENSP00000287600"/>
<dbReference type="PeptideAtlas" id="O43924"/>
<dbReference type="ProteomicsDB" id="49239"/>
<dbReference type="Pumba" id="O43924"/>
<dbReference type="Antibodypedia" id="34421">
    <property type="antibodies" value="149 antibodies from 26 providers"/>
</dbReference>
<dbReference type="DNASU" id="5147"/>
<dbReference type="Ensembl" id="ENST00000287600.9">
    <property type="protein sequence ID" value="ENSP00000287600.4"/>
    <property type="gene ID" value="ENSG00000156973.14"/>
</dbReference>
<dbReference type="GeneID" id="5147"/>
<dbReference type="KEGG" id="hsa:5147"/>
<dbReference type="MANE-Select" id="ENST00000287600.9">
    <property type="protein sequence ID" value="ENSP00000287600.4"/>
    <property type="RefSeq nucleotide sequence ID" value="NM_002601.4"/>
    <property type="RefSeq protein sequence ID" value="NP_002592.1"/>
</dbReference>
<dbReference type="AGR" id="HGNC:8788"/>
<dbReference type="CTD" id="5147"/>
<dbReference type="DisGeNET" id="5147"/>
<dbReference type="GeneCards" id="PDE6D"/>
<dbReference type="GeneReviews" id="PDE6D"/>
<dbReference type="HGNC" id="HGNC:8788">
    <property type="gene designation" value="PDE6D"/>
</dbReference>
<dbReference type="HPA" id="ENSG00000156973">
    <property type="expression patterns" value="Low tissue specificity"/>
</dbReference>
<dbReference type="MalaCards" id="PDE6D"/>
<dbReference type="MIM" id="602676">
    <property type="type" value="gene"/>
</dbReference>
<dbReference type="MIM" id="615665">
    <property type="type" value="phenotype"/>
</dbReference>
<dbReference type="neXtProt" id="NX_O43924"/>
<dbReference type="OpenTargets" id="ENSG00000156973"/>
<dbReference type="Orphanet" id="475">
    <property type="disease" value="Joubert syndrome"/>
</dbReference>
<dbReference type="Orphanet" id="2754">
    <property type="disease" value="Orofaciodigital syndrome type 6"/>
</dbReference>
<dbReference type="PharmGKB" id="PA33136"/>
<dbReference type="VEuPathDB" id="HostDB:ENSG00000156973"/>
<dbReference type="eggNOG" id="KOG4038">
    <property type="taxonomic scope" value="Eukaryota"/>
</dbReference>
<dbReference type="GeneTree" id="ENSGT00390000000263"/>
<dbReference type="HOGENOM" id="CLU_119682_0_0_1"/>
<dbReference type="InParanoid" id="O43924"/>
<dbReference type="OMA" id="STNTWQN"/>
<dbReference type="OrthoDB" id="10248777at2759"/>
<dbReference type="PAN-GO" id="O43924">
    <property type="GO annotations" value="1 GO annotation based on evolutionary models"/>
</dbReference>
<dbReference type="PhylomeDB" id="O43924"/>
<dbReference type="TreeFam" id="TF314474"/>
<dbReference type="PathwayCommons" id="O43924"/>
<dbReference type="Reactome" id="R-HSA-5624958">
    <property type="pathway name" value="ARL13B-mediated ciliary trafficking of INPP5E"/>
</dbReference>
<dbReference type="Reactome" id="R-HSA-9648002">
    <property type="pathway name" value="RAS processing"/>
</dbReference>
<dbReference type="SignaLink" id="O43924"/>
<dbReference type="BioGRID-ORCS" id="5147">
    <property type="hits" value="8 hits in 1154 CRISPR screens"/>
</dbReference>
<dbReference type="ChiTaRS" id="PDE6D">
    <property type="organism name" value="human"/>
</dbReference>
<dbReference type="EvolutionaryTrace" id="O43924"/>
<dbReference type="GeneWiki" id="PDE6D"/>
<dbReference type="GenomeRNAi" id="5147"/>
<dbReference type="Pharos" id="O43924">
    <property type="development level" value="Tclin"/>
</dbReference>
<dbReference type="PRO" id="PR:O43924"/>
<dbReference type="Proteomes" id="UP000005640">
    <property type="component" value="Chromosome 2"/>
</dbReference>
<dbReference type="RNAct" id="O43924">
    <property type="molecule type" value="protein"/>
</dbReference>
<dbReference type="Bgee" id="ENSG00000156973">
    <property type="expression patterns" value="Expressed in left testis and 200 other cell types or tissues"/>
</dbReference>
<dbReference type="ExpressionAtlas" id="O43924">
    <property type="expression patterns" value="baseline and differential"/>
</dbReference>
<dbReference type="GO" id="GO:0005929">
    <property type="term" value="C:cilium"/>
    <property type="evidence" value="ECO:0000304"/>
    <property type="project" value="Reactome"/>
</dbReference>
<dbReference type="GO" id="GO:0005737">
    <property type="term" value="C:cytoplasm"/>
    <property type="evidence" value="ECO:0000318"/>
    <property type="project" value="GO_Central"/>
</dbReference>
<dbReference type="GO" id="GO:0031410">
    <property type="term" value="C:cytoplasmic vesicle"/>
    <property type="evidence" value="ECO:0000314"/>
    <property type="project" value="UniProtKB"/>
</dbReference>
<dbReference type="GO" id="GO:0030659">
    <property type="term" value="C:cytoplasmic vesicle membrane"/>
    <property type="evidence" value="ECO:0007669"/>
    <property type="project" value="UniProtKB-SubCell"/>
</dbReference>
<dbReference type="GO" id="GO:0005856">
    <property type="term" value="C:cytoskeleton"/>
    <property type="evidence" value="ECO:0007669"/>
    <property type="project" value="UniProtKB-KW"/>
</dbReference>
<dbReference type="GO" id="GO:0005829">
    <property type="term" value="C:cytosol"/>
    <property type="evidence" value="ECO:0000314"/>
    <property type="project" value="UniProtKB"/>
</dbReference>
<dbReference type="GO" id="GO:0043231">
    <property type="term" value="C:intracellular membrane-bounded organelle"/>
    <property type="evidence" value="ECO:0000314"/>
    <property type="project" value="HPA"/>
</dbReference>
<dbReference type="GO" id="GO:0005095">
    <property type="term" value="F:GTPase inhibitor activity"/>
    <property type="evidence" value="ECO:0000250"/>
    <property type="project" value="UniProtKB"/>
</dbReference>
<dbReference type="GO" id="GO:0031267">
    <property type="term" value="F:small GTPase binding"/>
    <property type="evidence" value="ECO:0000353"/>
    <property type="project" value="UniProtKB"/>
</dbReference>
<dbReference type="GO" id="GO:0007601">
    <property type="term" value="P:visual perception"/>
    <property type="evidence" value="ECO:0000304"/>
    <property type="project" value="ProtInc"/>
</dbReference>
<dbReference type="FunFam" id="2.70.50.40:FF:000002">
    <property type="entry name" value="Retinal rod rhodopsin-sensitive cGMP 3',5'-cyclic phosphodiesterase subunit delta"/>
    <property type="match status" value="1"/>
</dbReference>
<dbReference type="Gene3D" id="2.70.50.40">
    <property type="entry name" value="GMP phosphodiesterase, delta subunit"/>
    <property type="match status" value="1"/>
</dbReference>
<dbReference type="InterPro" id="IPR014756">
    <property type="entry name" value="Ig_E-set"/>
</dbReference>
<dbReference type="InterPro" id="IPR008015">
    <property type="entry name" value="PDED_dom"/>
</dbReference>
<dbReference type="InterPro" id="IPR037036">
    <property type="entry name" value="PDED_dom_sf"/>
</dbReference>
<dbReference type="InterPro" id="IPR017287">
    <property type="entry name" value="Rhodop-sen_GMP-Pdiesterase_dsu"/>
</dbReference>
<dbReference type="PANTHER" id="PTHR12976">
    <property type="entry name" value="RETINAL ROD RHODOPSIN-SENSITIVE CGMP 3',5'-CYCLIC PHOSPHODIESTERASE DELTA-SUBUNIT"/>
    <property type="match status" value="1"/>
</dbReference>
<dbReference type="PANTHER" id="PTHR12976:SF0">
    <property type="entry name" value="RETINAL ROD RHODOPSIN-SENSITIVE CGMP 3',5'-CYCLIC PHOSPHODIESTERASE SUBUNIT DELTA"/>
    <property type="match status" value="1"/>
</dbReference>
<dbReference type="Pfam" id="PF05351">
    <property type="entry name" value="GMP_PDE_delta"/>
    <property type="match status" value="1"/>
</dbReference>
<dbReference type="PIRSF" id="PIRSF037825">
    <property type="entry name" value="GMP-Pdiesterase_delta"/>
    <property type="match status" value="1"/>
</dbReference>
<dbReference type="SUPFAM" id="SSF81296">
    <property type="entry name" value="E set domains"/>
    <property type="match status" value="1"/>
</dbReference>
<feature type="chain" id="PRO_0000221208" description="Retinal rod rhodopsin-sensitive cGMP 3',5'-cyclic phosphodiesterase subunit delta">
    <location>
        <begin position="1"/>
        <end position="150"/>
    </location>
</feature>
<feature type="region of interest" description="Required for association with membranes" evidence="9">
    <location>
        <begin position="144"/>
        <end position="150"/>
    </location>
</feature>
<feature type="sequence conflict" description="In Ref. 4; CAA04880." evidence="11" ref="4">
    <original>M</original>
    <variation>V</variation>
    <location>
        <position position="117"/>
    </location>
</feature>
<feature type="sequence conflict" description="In Ref. 4; CAA04880." evidence="11" ref="4">
    <original>R</original>
    <variation>G</variation>
    <location>
        <position position="146"/>
    </location>
</feature>
<feature type="helix" evidence="12">
    <location>
        <begin position="3"/>
        <end position="13"/>
    </location>
</feature>
<feature type="strand" evidence="12">
    <location>
        <begin position="15"/>
        <end position="24"/>
    </location>
</feature>
<feature type="turn" evidence="12">
    <location>
        <begin position="25"/>
        <end position="27"/>
    </location>
</feature>
<feature type="strand" evidence="12">
    <location>
        <begin position="30"/>
        <end position="34"/>
    </location>
</feature>
<feature type="strand" evidence="12">
    <location>
        <begin position="43"/>
        <end position="50"/>
    </location>
</feature>
<feature type="helix" evidence="12">
    <location>
        <begin position="51"/>
        <end position="55"/>
    </location>
</feature>
<feature type="strand" evidence="12">
    <location>
        <begin position="57"/>
        <end position="69"/>
    </location>
</feature>
<feature type="strand" evidence="12">
    <location>
        <begin position="71"/>
        <end position="82"/>
    </location>
</feature>
<feature type="strand" evidence="12">
    <location>
        <begin position="85"/>
        <end position="97"/>
    </location>
</feature>
<feature type="strand" evidence="12">
    <location>
        <begin position="101"/>
        <end position="110"/>
    </location>
</feature>
<feature type="helix" evidence="13">
    <location>
        <begin position="113"/>
        <end position="116"/>
    </location>
</feature>
<feature type="helix" evidence="12">
    <location>
        <begin position="120"/>
        <end position="123"/>
    </location>
</feature>
<feature type="turn" evidence="12">
    <location>
        <begin position="124"/>
        <end position="126"/>
    </location>
</feature>
<feature type="strand" evidence="12">
    <location>
        <begin position="127"/>
        <end position="135"/>
    </location>
</feature>
<feature type="strand" evidence="12">
    <location>
        <begin position="138"/>
        <end position="150"/>
    </location>
</feature>
<gene>
    <name type="primary">PDE6D</name>
    <name type="synonym">PDED</name>
</gene>
<sequence>MSAKDERAREILRGFKLNWMNLRDAETGKILWQGTEDLSVPGVEHEARVPKKILKCKAVSRELNFSSTEQMEKFRLEQKVYFKGQCLEEWFFEFGFVIPNSTNTWQSLIEAAPESQMMPASVLTGNVIIETKFFDDDLLVSTSRVRLFYV</sequence>
<keyword id="KW-0002">3D-structure</keyword>
<keyword id="KW-0966">Cell projection</keyword>
<keyword id="KW-0140">cGMP</keyword>
<keyword id="KW-1186">Ciliopathy</keyword>
<keyword id="KW-0963">Cytoplasm</keyword>
<keyword id="KW-0968">Cytoplasmic vesicle</keyword>
<keyword id="KW-0206">Cytoskeleton</keyword>
<keyword id="KW-0979">Joubert syndrome</keyword>
<keyword id="KW-0472">Membrane</keyword>
<keyword id="KW-1267">Proteomics identification</keyword>
<keyword id="KW-1185">Reference proteome</keyword>
<keyword id="KW-0716">Sensory transduction</keyword>
<keyword id="KW-0844">Vision</keyword>
<reference key="1">
    <citation type="journal article" date="1998" name="Genomics">
        <title>Characterization of human and mouse rod cGMP phosphodiesterase delta subunit (PDE6D) and chromosomal localization of the human gene.</title>
        <authorList>
            <person name="Li N."/>
            <person name="Florio S.K."/>
            <person name="Pettenati M.J."/>
            <person name="Rao P.N."/>
            <person name="Beavo J.A."/>
            <person name="Baehr W."/>
        </authorList>
    </citation>
    <scope>NUCLEOTIDE SEQUENCE [GENOMIC DNA]</scope>
</reference>
<reference key="2">
    <citation type="journal article" date="1997" name="Cytogenet. Cell Genet.">
        <title>cDNA sequence, genomic organization and mapping of PDE6D, the human gene encoding the delta subunit of the cGMP phosphodiesterase of retinal rod cells to chromosome 2q36.</title>
        <authorList>
            <person name="Erchova G."/>
            <person name="Derre J."/>
            <person name="Chatelin S."/>
            <person name="Nancy V."/>
            <person name="Berger R."/>
            <person name="Kaplan J."/>
            <person name="Munnich A."/>
            <person name="de Gunzburg J."/>
        </authorList>
    </citation>
    <scope>NUCLEOTIDE SEQUENCE [MRNA]</scope>
</reference>
<reference key="3">
    <citation type="journal article" date="1998" name="Eur. J. Hum. Genet.">
        <title>Cloning and gene structure of the rod cGMP phosphodiesterase delta subunit gene (PDED) in man and mouse.</title>
        <authorList>
            <person name="Lorenz B."/>
            <person name="Migliaccio C."/>
            <person name="Lichtner P."/>
            <person name="Meyer C."/>
            <person name="Strom T.M."/>
            <person name="D'Urso M."/>
            <person name="Becker J."/>
            <person name="Ciccodicola A."/>
            <person name="Meitinger T."/>
        </authorList>
    </citation>
    <scope>NUCLEOTIDE SEQUENCE [GENOMIC DNA]</scope>
</reference>
<reference key="4">
    <citation type="journal article" date="1998" name="J. Biol. Chem.">
        <title>The rod cGMP phosphodiesterase delta subunit dissociates the small GTPase Rab13 from membranes.</title>
        <authorList>
            <person name="Marzesco A.M."/>
            <person name="Galli T."/>
            <person name="Louvard D."/>
            <person name="Zahraoui A."/>
        </authorList>
    </citation>
    <scope>NUCLEOTIDE SEQUENCE [MRNA]</scope>
    <scope>FUNCTION</scope>
    <scope>INTERACTION WITH RAB13</scope>
    <scope>SUBCELLULAR LOCATION</scope>
    <scope>TISSUE SPECIFICITY</scope>
</reference>
<reference key="5">
    <citation type="submission" date="2003-05" db="EMBL/GenBank/DDBJ databases">
        <title>Cloning of human full-length CDSs in BD Creator(TM) system donor vector.</title>
        <authorList>
            <person name="Kalnine N."/>
            <person name="Chen X."/>
            <person name="Rolfs A."/>
            <person name="Halleck A."/>
            <person name="Hines L."/>
            <person name="Eisenstein S."/>
            <person name="Koundinya M."/>
            <person name="Raphael J."/>
            <person name="Moreira D."/>
            <person name="Kelley T."/>
            <person name="LaBaer J."/>
            <person name="Lin Y."/>
            <person name="Phelan M."/>
            <person name="Farmer A."/>
        </authorList>
    </citation>
    <scope>NUCLEOTIDE SEQUENCE [LARGE SCALE MRNA]</scope>
</reference>
<reference key="6">
    <citation type="journal article" date="2004" name="Genome Res.">
        <title>The status, quality, and expansion of the NIH full-length cDNA project: the Mammalian Gene Collection (MGC).</title>
        <authorList>
            <consortium name="The MGC Project Team"/>
        </authorList>
    </citation>
    <scope>NUCLEOTIDE SEQUENCE [LARGE SCALE MRNA]</scope>
    <source>
        <tissue>Placenta</tissue>
    </source>
</reference>
<reference key="7">
    <citation type="journal article" date="1999" name="FEBS Lett.">
        <title>The delta subunit of rod specific cyclic GMP phosphodiesterase, PDE delta, interacts with the Arf-like protein Arl3 in a GTP specific manner.</title>
        <authorList>
            <person name="Linari M."/>
            <person name="Hanzal-Bayer M."/>
            <person name="Becker J."/>
        </authorList>
    </citation>
    <scope>INTERACTION WITH ARL3</scope>
</reference>
<reference key="8">
    <citation type="journal article" date="1999" name="Proc. Natl. Acad. Sci. U.S.A.">
        <title>The retinitis pigmentosa GTPase regulator, RPGR, interacts with the delta subunit of rod cyclic GMP phosphodiesterase.</title>
        <authorList>
            <person name="Linari M."/>
            <person name="Ueffing M."/>
            <person name="Manson F."/>
            <person name="Wright A."/>
            <person name="Meitinger T."/>
            <person name="Becker J."/>
        </authorList>
    </citation>
    <scope>INTERACTION WITH RPGR</scope>
</reference>
<reference key="9">
    <citation type="journal article" date="2011" name="BMC Syst. Biol.">
        <title>Initial characterization of the human central proteome.</title>
        <authorList>
            <person name="Burkard T.R."/>
            <person name="Planyavsky M."/>
            <person name="Kaupe I."/>
            <person name="Breitwieser F.P."/>
            <person name="Buerckstuemmer T."/>
            <person name="Bennett K.L."/>
            <person name="Superti-Furga G."/>
            <person name="Colinge J."/>
        </authorList>
    </citation>
    <scope>IDENTIFICATION BY MASS SPECTROMETRY [LARGE SCALE ANALYSIS]</scope>
</reference>
<reference key="10">
    <citation type="journal article" date="2014" name="Hum. Mutat.">
        <title>A homozygous PDE6D mutation in Joubert syndrome impairs targeting of farnesylated INPP5E protein to the primary cilium.</title>
        <authorList>
            <person name="Thomas S."/>
            <person name="Wright K.J."/>
            <person name="Le Corre S."/>
            <person name="Micalizzi A."/>
            <person name="Romani M."/>
            <person name="Abhyankar A."/>
            <person name="Saada J."/>
            <person name="Perrault I."/>
            <person name="Amiel J."/>
            <person name="Litzler J."/>
            <person name="Filhol E."/>
            <person name="Elkhartoufi N."/>
            <person name="Kwong M."/>
            <person name="Casanova J.L."/>
            <person name="Boddaert N."/>
            <person name="Baehr W."/>
            <person name="Lyonnet S."/>
            <person name="Munnich A."/>
            <person name="Burglen L."/>
            <person name="Chassaing N."/>
            <person name="Encha-Ravazi F."/>
            <person name="Vekemans M."/>
            <person name="Gleeson J.G."/>
            <person name="Valente E.M."/>
            <person name="Jackson P.K."/>
            <person name="Drummond I.A."/>
            <person name="Saunier S."/>
            <person name="Attie-Bitach T."/>
        </authorList>
    </citation>
    <scope>INVOLVEMENT IN JBTS22</scope>
    <scope>FUNCTION</scope>
    <scope>INTERACTION WITH RPGR; ARL2; ARL3 AND INPP5E</scope>
    <scope>SUBCELLULAR LOCATION</scope>
</reference>
<reference key="11">
    <citation type="journal article" date="2002" name="EMBO J.">
        <title>The complex of Arl2-GTP and PDE delta: from structure to function.</title>
        <authorList>
            <person name="Hanzal-Bayer M."/>
            <person name="Renault L."/>
            <person name="Roversi P."/>
            <person name="Wittinghofer A."/>
            <person name="Hillig R.C."/>
        </authorList>
    </citation>
    <scope>X-RAY CRYSTALLOGRAPHY (1.8 ANGSTROMS) IN COMPLEX WITH MOUSE ARL2 AND GTP</scope>
    <scope>INTERACTION WITH HRAS</scope>
</reference>
<reference key="12">
    <citation type="journal article" date="2011" name="Nat. Chem. Biol.">
        <title>Arl2-GTP and Arl3-GTP regulate a GDI-like transport system for farnesylated cargo.</title>
        <authorList>
            <person name="Ismail S.A."/>
            <person name="Chen Y.X."/>
            <person name="Rusinova A."/>
            <person name="Chandra A."/>
            <person name="Bierbaum M."/>
            <person name="Gremer L."/>
            <person name="Triola G."/>
            <person name="Waldmann H."/>
            <person name="Bastiaens P.I."/>
            <person name="Wittinghofer A."/>
        </authorList>
    </citation>
    <scope>X-RAY CRYSTALLOGRAPHY (1.70 ANGSTROMS) IN COMPLEX WITH RHEB</scope>
    <scope>FUNCTION</scope>
    <scope>INTERACTION WITH RHEB; NRAS AND ARL2</scope>
    <scope>SUBCELLULAR LOCATION</scope>
</reference>
<reference key="13">
    <citation type="journal article" date="2013" name="EMBO Rep.">
        <title>The interplay between RPGR, PDE? and Arl2/3 regulate the ciliary targeting of farnesylated cargo.</title>
        <authorList>
            <person name="Watzlich D."/>
            <person name="Vetter I."/>
            <person name="Gotthardt K."/>
            <person name="Miertzschke M."/>
            <person name="Chen Y.X."/>
            <person name="Wittinghofer A."/>
            <person name="Ismail S."/>
        </authorList>
    </citation>
    <scope>X-RAY CRYSTALLOGRAPHY (1.90 ANGSTROMS) IN COMPLEX WITH RPGR</scope>
    <scope>FUNCTION</scope>
    <scope>INTERACTION WITH RPGR</scope>
</reference>
<reference key="14">
    <citation type="journal article" date="2013" name="Nature">
        <title>Small molecule inhibition of the KRAS-PDE? interaction impairs oncogenic KRAS signalling.</title>
        <authorList>
            <person name="Zimmermann G."/>
            <person name="Papke B."/>
            <person name="Ismail S."/>
            <person name="Vartak N."/>
            <person name="Chandra A."/>
            <person name="Hoffmann M."/>
            <person name="Hahn S.A."/>
            <person name="Triola G."/>
            <person name="Wittinghofer A."/>
            <person name="Bastiaens P.I."/>
            <person name="Waldmann H."/>
        </authorList>
    </citation>
    <scope>X-RAY CRYSTALLOGRAPHY (1.45 ANGSTROMS)</scope>
    <scope>FUNCTION</scope>
    <scope>INTERACTION WITH RHEB AND KRAS</scope>
    <scope>SUBCELLULAR LOCATION</scope>
</reference>
<comment type="function">
    <text evidence="1 3 5 6 7 8 9">Promotes the release of prenylated target proteins from cellular membranes (PubMed:9712853). Modulates the activity of prenylated or palmitoylated Ras family members by regulating their subcellular location (PubMed:22002721, PubMed:23698361). Required for normal ciliary targeting of farnesylated target proteins, such as INPP5E (PubMed:24166846). Required for RAB28 localization to the cone cell outer segments in the retina (By similarity). Modulates the subcellular location of target proteins by acting as a GTP specific dissociation inhibitor (GDI) (By similarity). Increases the affinity of ARL3 for GTP by several orders of magnitude. Stabilizes ARL3-GTP by decreasing the nucleotide dissociation rate (By similarity).</text>
</comment>
<comment type="subunit">
    <text evidence="1 2 3 4 5 6 7 8 10">Interacts with the prenylated catalytic subunits of PDE6, an oligomer composed of two catalytic chains (PDE6A and PDE6B) and two inhibitory chains (gamma); has no effect on enzyme activity but promotes the release of the prenylated enzyme from cell membrane (By similarity). Interacts with prenylated GRK1 and GRK7 (By similarity). Interacts with prenylated Ras family members, including RAP2A and RAP2C (By similarity). Interacts with prenylated RHEB and NRAS (PubMed:22002721). Interacts with prenylated HRAS and KRAS. Interacts with RAB13 (prenylated form); dissociates RAB13 from membranes (PubMed:9712853). Interacts with prenylated INPP5E (PubMed:24166846). Interacts with RAB28 (prenylated form); the interaction promotes RAB28 delivery to the photoreceptor outer segments (By similarity). Interacts with RPGR (PubMed:23559067, PubMed:24166846, PubMed:9990021). Interacts with ARL2 (PubMed:22002721, PubMed:24166846). Interacts with ARL3; the interaction occurs specifically with the GTP-bound form of ARL3 (PubMed:24166846). Interaction with ARL2 and ARL3 promotes release of farnesylated cargo proteins (PubMed:22002721).</text>
</comment>
<comment type="interaction">
    <interactant intactId="EBI-712685">
        <id>O43924</id>
    </interactant>
    <interactant intactId="EBI-711759">
        <id>Q9NXU5</id>
        <label>ARL15</label>
    </interactant>
    <organismsDiffer>false</organismsDiffer>
    <experiments>4</experiments>
</comment>
<comment type="interaction">
    <interactant intactId="EBI-712685">
        <id>O43924</id>
    </interactant>
    <interactant intactId="EBI-10186132">
        <id>Q0P5N6</id>
        <label>ARL16</label>
    </interactant>
    <organismsDiffer>false</organismsDiffer>
    <experiments>13</experiments>
</comment>
<comment type="interaction">
    <interactant intactId="EBI-712685">
        <id>O43924</id>
    </interactant>
    <interactant intactId="EBI-752365">
        <id>P36404</id>
        <label>ARL2</label>
    </interactant>
    <organismsDiffer>false</organismsDiffer>
    <experiments>19</experiments>
</comment>
<comment type="interaction">
    <interactant intactId="EBI-712685">
        <id>O43924</id>
    </interactant>
    <interactant intactId="EBI-712710">
        <id>P36405</id>
        <label>ARL3</label>
    </interactant>
    <organismsDiffer>false</organismsDiffer>
    <experiments>11</experiments>
</comment>
<comment type="interaction">
    <interactant intactId="EBI-712685">
        <id>O43924</id>
    </interactant>
    <interactant intactId="EBI-12865884">
        <id>Q5XKR4</id>
        <label>OTP</label>
    </interactant>
    <organismsDiffer>false</organismsDiffer>
    <experiments>3</experiments>
</comment>
<comment type="interaction">
    <interactant intactId="EBI-712685">
        <id>O43924</id>
    </interactant>
    <interactant intactId="EBI-1780121">
        <id>P51153</id>
        <label>RAB13</label>
    </interactant>
    <organismsDiffer>false</organismsDiffer>
    <experiments>2</experiments>
</comment>
<comment type="interaction">
    <interactant intactId="EBI-712685">
        <id>O43924</id>
    </interactant>
    <interactant intactId="EBI-6860739">
        <id>PRO_0000082708</id>
        <label>RHEB</label>
        <dbReference type="UniProtKB" id="Q15382"/>
    </interactant>
    <organismsDiffer>false</organismsDiffer>
    <experiments>5</experiments>
</comment>
<comment type="interaction">
    <interactant intactId="EBI-712685">
        <id>O43924</id>
    </interactant>
    <interactant intactId="EBI-6558417">
        <id>Q92834</id>
        <label>RPGR</label>
    </interactant>
    <organismsDiffer>false</organismsDiffer>
    <experiments>12</experiments>
</comment>
<comment type="interaction">
    <interactant intactId="EBI-712685">
        <id>O43924</id>
    </interactant>
    <interactant intactId="EBI-6558503">
        <id>Q92834-2</id>
        <label>RPGR</label>
    </interactant>
    <organismsDiffer>false</organismsDiffer>
    <experiments>3</experiments>
</comment>
<comment type="interaction">
    <interactant intactId="EBI-712685">
        <id>O43924</id>
    </interactant>
    <interactant intactId="EBI-1033319">
        <id>Q9D0J4</id>
        <label>Arl2</label>
    </interactant>
    <organismsDiffer>true</organismsDiffer>
    <experiments>6</experiments>
</comment>
<comment type="interaction">
    <interactant intactId="EBI-712685">
        <id>O43924</id>
    </interactant>
    <interactant intactId="EBI-6860857">
        <id>Q9WUL7</id>
        <label>Arl3</label>
    </interactant>
    <organismsDiffer>true</organismsDiffer>
    <experiments>4</experiments>
</comment>
<comment type="interaction">
    <interactant intactId="EBI-712685">
        <id>O43924</id>
    </interactant>
    <interactant intactId="EBI-6480811">
        <id>Q7DB77</id>
        <label>tir</label>
    </interactant>
    <organismsDiffer>true</organismsDiffer>
    <experiments>3</experiments>
</comment>
<comment type="subcellular location">
    <subcellularLocation>
        <location evidence="5 7 9">Cytoplasm</location>
        <location evidence="5 7 9">Cytosol</location>
    </subcellularLocation>
    <subcellularLocation>
        <location evidence="9">Cytoplasmic vesicle membrane</location>
        <topology evidence="9">Peripheral membrane protein</topology>
    </subcellularLocation>
    <subcellularLocation>
        <location evidence="8">Cytoplasm</location>
        <location evidence="8">Cytoskeleton</location>
        <location evidence="8">Cilium basal body</location>
    </subcellularLocation>
</comment>
<comment type="tissue specificity">
    <text evidence="9">Widely expressed. Detected in various tissues including spleen, prostate gland, testis, ovary, small intestine, colon, retina, and peripheral blood.</text>
</comment>
<comment type="disease" evidence="8">
    <disease id="DI-04020">
        <name>Joubert syndrome 22</name>
        <acronym>JBTS22</acronym>
        <description>A disorder presenting with cerebellar ataxia, oculomotor apraxia, hypotonia, neonatal breathing abnormalities and psychomotor delay. Neuroradiologically, it is characterized by cerebellar vermian hypoplasia/aplasia, thickened and reoriented superior cerebellar peduncles, and an abnormally large interpeduncular fossa, giving the appearance of a molar tooth on transaxial slices (molar tooth sign). Additional variable features include retinal dystrophy, renal disease, liver fibrosis, and polydactyly.</description>
        <dbReference type="MIM" id="615665"/>
    </disease>
    <text>The disease is caused by variants affecting the gene represented in this entry.</text>
</comment>
<comment type="similarity">
    <text evidence="11">Belongs to the PDE6D/unc-119 family.</text>
</comment>